<dbReference type="EMBL" id="AK041423">
    <property type="protein sequence ID" value="BAC30940.1"/>
    <property type="molecule type" value="mRNA"/>
</dbReference>
<dbReference type="EMBL" id="AC169677">
    <property type="status" value="NOT_ANNOTATED_CDS"/>
    <property type="molecule type" value="Genomic_DNA"/>
</dbReference>
<dbReference type="EMBL" id="BC034512">
    <property type="protein sequence ID" value="AAH34512.1"/>
    <property type="molecule type" value="mRNA"/>
</dbReference>
<dbReference type="EMBL" id="BC060639">
    <property type="protein sequence ID" value="AAH60639.1"/>
    <property type="molecule type" value="mRNA"/>
</dbReference>
<dbReference type="EMBL" id="AK172963">
    <property type="protein sequence ID" value="BAD32241.1"/>
    <property type="molecule type" value="mRNA"/>
</dbReference>
<dbReference type="CCDS" id="CCDS22060.1">
    <molecule id="Q6P9R4-1"/>
</dbReference>
<dbReference type="RefSeq" id="NP_001357597.1">
    <molecule id="Q6P9R4-4"/>
    <property type="nucleotide sequence ID" value="NM_001370668.1"/>
</dbReference>
<dbReference type="RefSeq" id="NP_598723.3">
    <molecule id="Q6P9R4-1"/>
    <property type="nucleotide sequence ID" value="NM_133962.3"/>
</dbReference>
<dbReference type="RefSeq" id="XP_036009592.1">
    <molecule id="Q6P9R4-1"/>
    <property type="nucleotide sequence ID" value="XM_036153699.1"/>
</dbReference>
<dbReference type="RefSeq" id="XP_036009593.1">
    <molecule id="Q6P9R4-1"/>
    <property type="nucleotide sequence ID" value="XM_036153700.1"/>
</dbReference>
<dbReference type="PDB" id="6BCB">
    <property type="method" value="X-ray"/>
    <property type="resolution" value="1.40 A"/>
    <property type="chains" value="A=686-828"/>
</dbReference>
<dbReference type="PDBsum" id="6BCB"/>
<dbReference type="SMR" id="Q6P9R4"/>
<dbReference type="BioGRID" id="221794">
    <property type="interactions" value="18"/>
</dbReference>
<dbReference type="FunCoup" id="Q6P9R4">
    <property type="interactions" value="1208"/>
</dbReference>
<dbReference type="IntAct" id="Q6P9R4">
    <property type="interactions" value="5"/>
</dbReference>
<dbReference type="MINT" id="Q6P9R4"/>
<dbReference type="STRING" id="10090.ENSMUSP00000004684"/>
<dbReference type="GlyGen" id="Q6P9R4">
    <property type="glycosylation" value="4 sites, 1 N-linked glycan (1 site)"/>
</dbReference>
<dbReference type="iPTMnet" id="Q6P9R4"/>
<dbReference type="PhosphoSitePlus" id="Q6P9R4"/>
<dbReference type="jPOST" id="Q6P9R4"/>
<dbReference type="PaxDb" id="10090-ENSMUSP00000004684"/>
<dbReference type="PeptideAtlas" id="Q6P9R4"/>
<dbReference type="ProteomicsDB" id="273935">
    <molecule id="Q6P9R4-4"/>
</dbReference>
<dbReference type="ProteomicsDB" id="273936">
    <molecule id="Q6P9R4-2"/>
</dbReference>
<dbReference type="ProteomicsDB" id="273937">
    <molecule id="Q6P9R4-3"/>
</dbReference>
<dbReference type="Pumba" id="Q6P9R4"/>
<dbReference type="Antibodypedia" id="24427">
    <property type="antibodies" value="286 antibodies from 30 providers"/>
</dbReference>
<dbReference type="DNASU" id="102098"/>
<dbReference type="Ensembl" id="ENSMUST00000004684.13">
    <molecule id="Q6P9R4-1"/>
    <property type="protein sequence ID" value="ENSMUSP00000004684.7"/>
    <property type="gene ID" value="ENSMUSG00000004568.14"/>
</dbReference>
<dbReference type="GeneID" id="102098"/>
<dbReference type="KEGG" id="mmu:102098"/>
<dbReference type="UCSC" id="uc009kri.1">
    <molecule id="Q6P9R4-3"/>
    <property type="organism name" value="mouse"/>
</dbReference>
<dbReference type="UCSC" id="uc009krj.1">
    <molecule id="Q6P9R4-4"/>
    <property type="organism name" value="mouse"/>
</dbReference>
<dbReference type="UCSC" id="uc009krk.1">
    <molecule id="Q6P9R4-2"/>
    <property type="organism name" value="mouse"/>
</dbReference>
<dbReference type="AGR" id="MGI:2142567"/>
<dbReference type="CTD" id="23370"/>
<dbReference type="MGI" id="MGI:2142567">
    <property type="gene designation" value="Arhgef18"/>
</dbReference>
<dbReference type="VEuPathDB" id="HostDB:ENSMUSG00000004568"/>
<dbReference type="eggNOG" id="KOG3520">
    <property type="taxonomic scope" value="Eukaryota"/>
</dbReference>
<dbReference type="GeneTree" id="ENSGT00940000157375"/>
<dbReference type="HOGENOM" id="CLU_002466_0_0_1"/>
<dbReference type="InParanoid" id="Q6P9R4"/>
<dbReference type="PhylomeDB" id="Q6P9R4"/>
<dbReference type="TreeFam" id="TF325887"/>
<dbReference type="Reactome" id="R-MMU-193648">
    <property type="pathway name" value="NRAGE signals death through JNK"/>
</dbReference>
<dbReference type="Reactome" id="R-MMU-2173791">
    <property type="pathway name" value="TGF-beta receptor signaling in EMT (epithelial to mesenchymal transition)"/>
</dbReference>
<dbReference type="Reactome" id="R-MMU-416482">
    <property type="pathway name" value="G alpha (12/13) signalling events"/>
</dbReference>
<dbReference type="Reactome" id="R-MMU-8980692">
    <property type="pathway name" value="RHOA GTPase cycle"/>
</dbReference>
<dbReference type="Reactome" id="R-MMU-9013149">
    <property type="pathway name" value="RAC1 GTPase cycle"/>
</dbReference>
<dbReference type="BioGRID-ORCS" id="102098">
    <property type="hits" value="2 hits in 79 CRISPR screens"/>
</dbReference>
<dbReference type="ChiTaRS" id="Arhgef18">
    <property type="organism name" value="mouse"/>
</dbReference>
<dbReference type="PRO" id="PR:Q6P9R4"/>
<dbReference type="Proteomes" id="UP000000589">
    <property type="component" value="Chromosome 8"/>
</dbReference>
<dbReference type="RNAct" id="Q6P9R4">
    <property type="molecule type" value="protein"/>
</dbReference>
<dbReference type="Bgee" id="ENSMUSG00000004568">
    <property type="expression patterns" value="Expressed in pigmented layer of retina and 238 other cell types or tissues"/>
</dbReference>
<dbReference type="ExpressionAtlas" id="Q6P9R4">
    <property type="expression patterns" value="baseline and differential"/>
</dbReference>
<dbReference type="GO" id="GO:0045177">
    <property type="term" value="C:apical part of cell"/>
    <property type="evidence" value="ECO:0000266"/>
    <property type="project" value="MGI"/>
</dbReference>
<dbReference type="GO" id="GO:0016324">
    <property type="term" value="C:apical plasma membrane"/>
    <property type="evidence" value="ECO:0007669"/>
    <property type="project" value="UniProtKB-SubCell"/>
</dbReference>
<dbReference type="GO" id="GO:0005737">
    <property type="term" value="C:cytoplasm"/>
    <property type="evidence" value="ECO:0007669"/>
    <property type="project" value="UniProtKB-SubCell"/>
</dbReference>
<dbReference type="GO" id="GO:0005856">
    <property type="term" value="C:cytoskeleton"/>
    <property type="evidence" value="ECO:0007669"/>
    <property type="project" value="UniProtKB-SubCell"/>
</dbReference>
<dbReference type="GO" id="GO:0005085">
    <property type="term" value="F:guanyl-nucleotide exchange factor activity"/>
    <property type="evidence" value="ECO:0000266"/>
    <property type="project" value="MGI"/>
</dbReference>
<dbReference type="GO" id="GO:0008270">
    <property type="term" value="F:zinc ion binding"/>
    <property type="evidence" value="ECO:0007669"/>
    <property type="project" value="UniProtKB-KW"/>
</dbReference>
<dbReference type="GO" id="GO:0030036">
    <property type="term" value="P:actin cytoskeleton organization"/>
    <property type="evidence" value="ECO:0000266"/>
    <property type="project" value="MGI"/>
</dbReference>
<dbReference type="GO" id="GO:0008360">
    <property type="term" value="P:regulation of cell shape"/>
    <property type="evidence" value="ECO:0000266"/>
    <property type="project" value="MGI"/>
</dbReference>
<dbReference type="GO" id="GO:0007264">
    <property type="term" value="P:small GTPase-mediated signal transduction"/>
    <property type="evidence" value="ECO:0000266"/>
    <property type="project" value="MGI"/>
</dbReference>
<dbReference type="CDD" id="cd15794">
    <property type="entry name" value="PH_ARHGEF18"/>
    <property type="match status" value="1"/>
</dbReference>
<dbReference type="CDD" id="cd00160">
    <property type="entry name" value="RhoGEF"/>
    <property type="match status" value="1"/>
</dbReference>
<dbReference type="FunFam" id="1.20.900.10:FF:000004">
    <property type="entry name" value="Rho guanine nucleotide exchange factor 2"/>
    <property type="match status" value="1"/>
</dbReference>
<dbReference type="FunFam" id="2.30.29.30:FF:000021">
    <property type="entry name" value="Rho guanine nucleotide exchange factor 2"/>
    <property type="match status" value="1"/>
</dbReference>
<dbReference type="Gene3D" id="1.20.900.10">
    <property type="entry name" value="Dbl homology (DH) domain"/>
    <property type="match status" value="1"/>
</dbReference>
<dbReference type="Gene3D" id="2.30.29.30">
    <property type="entry name" value="Pleckstrin-homology domain (PH domain)/Phosphotyrosine-binding domain (PTB)"/>
    <property type="match status" value="1"/>
</dbReference>
<dbReference type="InterPro" id="IPR037744">
    <property type="entry name" value="ARHGEF18_PH"/>
</dbReference>
<dbReference type="InterPro" id="IPR035899">
    <property type="entry name" value="DBL_dom_sf"/>
</dbReference>
<dbReference type="InterPro" id="IPR000219">
    <property type="entry name" value="DH_dom"/>
</dbReference>
<dbReference type="InterPro" id="IPR011993">
    <property type="entry name" value="PH-like_dom_sf"/>
</dbReference>
<dbReference type="InterPro" id="IPR041020">
    <property type="entry name" value="PH_16"/>
</dbReference>
<dbReference type="InterPro" id="IPR001849">
    <property type="entry name" value="PH_domain"/>
</dbReference>
<dbReference type="InterPro" id="IPR053089">
    <property type="entry name" value="Rho_GEF18"/>
</dbReference>
<dbReference type="PANTHER" id="PTHR47440:SF1">
    <property type="entry name" value="RHO_RAC GUANINE NUCLEOTIDE EXCHANGE FACTOR 18"/>
    <property type="match status" value="1"/>
</dbReference>
<dbReference type="PANTHER" id="PTHR47440">
    <property type="entry name" value="RIKEN CDNA A430078G23 GENE"/>
    <property type="match status" value="1"/>
</dbReference>
<dbReference type="Pfam" id="PF17838">
    <property type="entry name" value="PH_16"/>
    <property type="match status" value="1"/>
</dbReference>
<dbReference type="Pfam" id="PF00621">
    <property type="entry name" value="RhoGEF"/>
    <property type="match status" value="1"/>
</dbReference>
<dbReference type="SMART" id="SM00233">
    <property type="entry name" value="PH"/>
    <property type="match status" value="1"/>
</dbReference>
<dbReference type="SMART" id="SM00325">
    <property type="entry name" value="RhoGEF"/>
    <property type="match status" value="1"/>
</dbReference>
<dbReference type="SUPFAM" id="SSF48065">
    <property type="entry name" value="DBL homology domain (DH-domain)"/>
    <property type="match status" value="1"/>
</dbReference>
<dbReference type="SUPFAM" id="SSF50729">
    <property type="entry name" value="PH domain-like"/>
    <property type="match status" value="1"/>
</dbReference>
<dbReference type="PROSITE" id="PS50010">
    <property type="entry name" value="DH_2"/>
    <property type="match status" value="1"/>
</dbReference>
<dbReference type="PROSITE" id="PS50003">
    <property type="entry name" value="PH_DOMAIN"/>
    <property type="match status" value="1"/>
</dbReference>
<name>ARHGI_MOUSE</name>
<reference key="1">
    <citation type="journal article" date="2005" name="Science">
        <title>The transcriptional landscape of the mammalian genome.</title>
        <authorList>
            <person name="Carninci P."/>
            <person name="Kasukawa T."/>
            <person name="Katayama S."/>
            <person name="Gough J."/>
            <person name="Frith M.C."/>
            <person name="Maeda N."/>
            <person name="Oyama R."/>
            <person name="Ravasi T."/>
            <person name="Lenhard B."/>
            <person name="Wells C."/>
            <person name="Kodzius R."/>
            <person name="Shimokawa K."/>
            <person name="Bajic V.B."/>
            <person name="Brenner S.E."/>
            <person name="Batalov S."/>
            <person name="Forrest A.R."/>
            <person name="Zavolan M."/>
            <person name="Davis M.J."/>
            <person name="Wilming L.G."/>
            <person name="Aidinis V."/>
            <person name="Allen J.E."/>
            <person name="Ambesi-Impiombato A."/>
            <person name="Apweiler R."/>
            <person name="Aturaliya R.N."/>
            <person name="Bailey T.L."/>
            <person name="Bansal M."/>
            <person name="Baxter L."/>
            <person name="Beisel K.W."/>
            <person name="Bersano T."/>
            <person name="Bono H."/>
            <person name="Chalk A.M."/>
            <person name="Chiu K.P."/>
            <person name="Choudhary V."/>
            <person name="Christoffels A."/>
            <person name="Clutterbuck D.R."/>
            <person name="Crowe M.L."/>
            <person name="Dalla E."/>
            <person name="Dalrymple B.P."/>
            <person name="de Bono B."/>
            <person name="Della Gatta G."/>
            <person name="di Bernardo D."/>
            <person name="Down T."/>
            <person name="Engstrom P."/>
            <person name="Fagiolini M."/>
            <person name="Faulkner G."/>
            <person name="Fletcher C.F."/>
            <person name="Fukushima T."/>
            <person name="Furuno M."/>
            <person name="Futaki S."/>
            <person name="Gariboldi M."/>
            <person name="Georgii-Hemming P."/>
            <person name="Gingeras T.R."/>
            <person name="Gojobori T."/>
            <person name="Green R.E."/>
            <person name="Gustincich S."/>
            <person name="Harbers M."/>
            <person name="Hayashi Y."/>
            <person name="Hensch T.K."/>
            <person name="Hirokawa N."/>
            <person name="Hill D."/>
            <person name="Huminiecki L."/>
            <person name="Iacono M."/>
            <person name="Ikeo K."/>
            <person name="Iwama A."/>
            <person name="Ishikawa T."/>
            <person name="Jakt M."/>
            <person name="Kanapin A."/>
            <person name="Katoh M."/>
            <person name="Kawasawa Y."/>
            <person name="Kelso J."/>
            <person name="Kitamura H."/>
            <person name="Kitano H."/>
            <person name="Kollias G."/>
            <person name="Krishnan S.P."/>
            <person name="Kruger A."/>
            <person name="Kummerfeld S.K."/>
            <person name="Kurochkin I.V."/>
            <person name="Lareau L.F."/>
            <person name="Lazarevic D."/>
            <person name="Lipovich L."/>
            <person name="Liu J."/>
            <person name="Liuni S."/>
            <person name="McWilliam S."/>
            <person name="Madan Babu M."/>
            <person name="Madera M."/>
            <person name="Marchionni L."/>
            <person name="Matsuda H."/>
            <person name="Matsuzawa S."/>
            <person name="Miki H."/>
            <person name="Mignone F."/>
            <person name="Miyake S."/>
            <person name="Morris K."/>
            <person name="Mottagui-Tabar S."/>
            <person name="Mulder N."/>
            <person name="Nakano N."/>
            <person name="Nakauchi H."/>
            <person name="Ng P."/>
            <person name="Nilsson R."/>
            <person name="Nishiguchi S."/>
            <person name="Nishikawa S."/>
            <person name="Nori F."/>
            <person name="Ohara O."/>
            <person name="Okazaki Y."/>
            <person name="Orlando V."/>
            <person name="Pang K.C."/>
            <person name="Pavan W.J."/>
            <person name="Pavesi G."/>
            <person name="Pesole G."/>
            <person name="Petrovsky N."/>
            <person name="Piazza S."/>
            <person name="Reed J."/>
            <person name="Reid J.F."/>
            <person name="Ring B.Z."/>
            <person name="Ringwald M."/>
            <person name="Rost B."/>
            <person name="Ruan Y."/>
            <person name="Salzberg S.L."/>
            <person name="Sandelin A."/>
            <person name="Schneider C."/>
            <person name="Schoenbach C."/>
            <person name="Sekiguchi K."/>
            <person name="Semple C.A."/>
            <person name="Seno S."/>
            <person name="Sessa L."/>
            <person name="Sheng Y."/>
            <person name="Shibata Y."/>
            <person name="Shimada H."/>
            <person name="Shimada K."/>
            <person name="Silva D."/>
            <person name="Sinclair B."/>
            <person name="Sperling S."/>
            <person name="Stupka E."/>
            <person name="Sugiura K."/>
            <person name="Sultana R."/>
            <person name="Takenaka Y."/>
            <person name="Taki K."/>
            <person name="Tammoja K."/>
            <person name="Tan S.L."/>
            <person name="Tang S."/>
            <person name="Taylor M.S."/>
            <person name="Tegner J."/>
            <person name="Teichmann S.A."/>
            <person name="Ueda H.R."/>
            <person name="van Nimwegen E."/>
            <person name="Verardo R."/>
            <person name="Wei C.L."/>
            <person name="Yagi K."/>
            <person name="Yamanishi H."/>
            <person name="Zabarovsky E."/>
            <person name="Zhu S."/>
            <person name="Zimmer A."/>
            <person name="Hide W."/>
            <person name="Bult C."/>
            <person name="Grimmond S.M."/>
            <person name="Teasdale R.D."/>
            <person name="Liu E.T."/>
            <person name="Brusic V."/>
            <person name="Quackenbush J."/>
            <person name="Wahlestedt C."/>
            <person name="Mattick J.S."/>
            <person name="Hume D.A."/>
            <person name="Kai C."/>
            <person name="Sasaki D."/>
            <person name="Tomaru Y."/>
            <person name="Fukuda S."/>
            <person name="Kanamori-Katayama M."/>
            <person name="Suzuki M."/>
            <person name="Aoki J."/>
            <person name="Arakawa T."/>
            <person name="Iida J."/>
            <person name="Imamura K."/>
            <person name="Itoh M."/>
            <person name="Kato T."/>
            <person name="Kawaji H."/>
            <person name="Kawagashira N."/>
            <person name="Kawashima T."/>
            <person name="Kojima M."/>
            <person name="Kondo S."/>
            <person name="Konno H."/>
            <person name="Nakano K."/>
            <person name="Ninomiya N."/>
            <person name="Nishio T."/>
            <person name="Okada M."/>
            <person name="Plessy C."/>
            <person name="Shibata K."/>
            <person name="Shiraki T."/>
            <person name="Suzuki S."/>
            <person name="Tagami M."/>
            <person name="Waki K."/>
            <person name="Watahiki A."/>
            <person name="Okamura-Oho Y."/>
            <person name="Suzuki H."/>
            <person name="Kawai J."/>
            <person name="Hayashizaki Y."/>
        </authorList>
    </citation>
    <scope>NUCLEOTIDE SEQUENCE [LARGE SCALE MRNA] (ISOFORM 4)</scope>
    <source>
        <strain>C57BL/6J</strain>
        <tissue>Thymus</tissue>
    </source>
</reference>
<reference key="2">
    <citation type="journal article" date="2009" name="PLoS Biol.">
        <title>Lineage-specific biology revealed by a finished genome assembly of the mouse.</title>
        <authorList>
            <person name="Church D.M."/>
            <person name="Goodstadt L."/>
            <person name="Hillier L.W."/>
            <person name="Zody M.C."/>
            <person name="Goldstein S."/>
            <person name="She X."/>
            <person name="Bult C.J."/>
            <person name="Agarwala R."/>
            <person name="Cherry J.L."/>
            <person name="DiCuccio M."/>
            <person name="Hlavina W."/>
            <person name="Kapustin Y."/>
            <person name="Meric P."/>
            <person name="Maglott D."/>
            <person name="Birtle Z."/>
            <person name="Marques A.C."/>
            <person name="Graves T."/>
            <person name="Zhou S."/>
            <person name="Teague B."/>
            <person name="Potamousis K."/>
            <person name="Churas C."/>
            <person name="Place M."/>
            <person name="Herschleb J."/>
            <person name="Runnheim R."/>
            <person name="Forrest D."/>
            <person name="Amos-Landgraf J."/>
            <person name="Schwartz D.C."/>
            <person name="Cheng Z."/>
            <person name="Lindblad-Toh K."/>
            <person name="Eichler E.E."/>
            <person name="Ponting C.P."/>
        </authorList>
    </citation>
    <scope>NUCLEOTIDE SEQUENCE [LARGE SCALE GENOMIC DNA]</scope>
    <source>
        <strain>C57BL/6J</strain>
    </source>
</reference>
<reference key="3">
    <citation type="journal article" date="2004" name="Genome Res.">
        <title>The status, quality, and expansion of the NIH full-length cDNA project: the Mammalian Gene Collection (MGC).</title>
        <authorList>
            <consortium name="The MGC Project Team"/>
        </authorList>
    </citation>
    <scope>NUCLEOTIDE SEQUENCE [LARGE SCALE MRNA] (ISOFORM 2)</scope>
    <source>
        <strain>C57BL/6J</strain>
        <strain>Czech II</strain>
        <tissue>Brain</tissue>
        <tissue>Mammary tumor</tissue>
    </source>
</reference>
<reference key="4">
    <citation type="journal article" date="2004" name="DNA Res.">
        <title>Prediction of the coding sequences of mouse homologues of KIAA gene: IV. The complete nucleotide sequences of 500 mouse KIAA-homologous cDNAs identified by screening of terminal sequences of cDNA clones randomly sampled from size-fractionated libraries.</title>
        <authorList>
            <person name="Okazaki N."/>
            <person name="Kikuno R."/>
            <person name="Ohara R."/>
            <person name="Inamoto S."/>
            <person name="Koseki H."/>
            <person name="Hiraoka S."/>
            <person name="Saga Y."/>
            <person name="Seino S."/>
            <person name="Nishimura M."/>
            <person name="Kaisho T."/>
            <person name="Hoshino K."/>
            <person name="Kitamura H."/>
            <person name="Nagase T."/>
            <person name="Ohara O."/>
            <person name="Koga H."/>
        </authorList>
    </citation>
    <scope>NUCLEOTIDE SEQUENCE [LARGE SCALE MRNA] OF 628-1405 (ISOFORM 3)</scope>
</reference>
<reference key="5">
    <citation type="journal article" date="2010" name="Cell">
        <title>A tissue-specific atlas of mouse protein phosphorylation and expression.</title>
        <authorList>
            <person name="Huttlin E.L."/>
            <person name="Jedrychowski M.P."/>
            <person name="Elias J.E."/>
            <person name="Goswami T."/>
            <person name="Rad R."/>
            <person name="Beausoleil S.A."/>
            <person name="Villen J."/>
            <person name="Haas W."/>
            <person name="Sowa M.E."/>
            <person name="Gygi S.P."/>
        </authorList>
    </citation>
    <scope>PHOSPHORYLATION [LARGE SCALE ANALYSIS] AT THR-952; SER-961; SER-1336 AND SER-1338</scope>
    <scope>IDENTIFICATION BY MASS SPECTROMETRY [LARGE SCALE ANALYSIS]</scope>
    <source>
        <tissue>Brain</tissue>
        <tissue>Lung</tissue>
        <tissue>Pancreas</tissue>
        <tissue>Testis</tissue>
    </source>
</reference>
<reference key="6">
    <citation type="journal article" date="2018" name="J. Leukoc. Biol.">
        <title>Expression of novel 'LOCGEF' isoforms of ARHGEF18 in eosinophils.</title>
        <authorList>
            <person name="Turton K.B."/>
            <person name="Wilkerson E.M."/>
            <person name="Hebert A.S."/>
            <person name="Fogerty F.J."/>
            <person name="Schira H.M."/>
            <person name="Botros F.E."/>
            <person name="Coon J.J."/>
            <person name="Mosher D.F."/>
        </authorList>
    </citation>
    <scope>IDENTIFICATION (ISOFORM 1)</scope>
</reference>
<keyword id="KW-0002">3D-structure</keyword>
<keyword id="KW-0025">Alternative splicing</keyword>
<keyword id="KW-1003">Cell membrane</keyword>
<keyword id="KW-0175">Coiled coil</keyword>
<keyword id="KW-0963">Cytoplasm</keyword>
<keyword id="KW-0206">Cytoskeleton</keyword>
<keyword id="KW-0344">Guanine-nucleotide releasing factor</keyword>
<keyword id="KW-0472">Membrane</keyword>
<keyword id="KW-0479">Metal-binding</keyword>
<keyword id="KW-0597">Phosphoprotein</keyword>
<keyword id="KW-1185">Reference proteome</keyword>
<keyword id="KW-0862">Zinc</keyword>
<keyword id="KW-0863">Zinc-finger</keyword>
<organism>
    <name type="scientific">Mus musculus</name>
    <name type="common">Mouse</name>
    <dbReference type="NCBI Taxonomy" id="10090"/>
    <lineage>
        <taxon>Eukaryota</taxon>
        <taxon>Metazoa</taxon>
        <taxon>Chordata</taxon>
        <taxon>Craniata</taxon>
        <taxon>Vertebrata</taxon>
        <taxon>Euteleostomi</taxon>
        <taxon>Mammalia</taxon>
        <taxon>Eutheria</taxon>
        <taxon>Euarchontoglires</taxon>
        <taxon>Glires</taxon>
        <taxon>Rodentia</taxon>
        <taxon>Myomorpha</taxon>
        <taxon>Muroidea</taxon>
        <taxon>Muridae</taxon>
        <taxon>Murinae</taxon>
        <taxon>Mus</taxon>
        <taxon>Mus</taxon>
    </lineage>
</organism>
<sequence>MGSEPKPYAQPLDSAAAASTTKGSCGPRKPENPDFFSTVEDEQEDGFLRHLSESTEDFSLDMGALQGSEYLRDLGLGAPSDLHQSEVIMDPETHRQEARRESSHTSCEGASALPQRRSWERSRSCSGSCRRLSLDASTVDKGACLPRTLASLALNLSGNGQKIWTQGCLPVSGTPAPSSKECSSPEKRLRSKSVPVSCEISCMELASDSDVCTSPVQGLEPPVLECLEKDHVEPEHVLIVQQVLQELRQYHGARQRARMSTSPGGAHSNLTWFEFLSESEDGACKIEKPGKSTRVKRSLSSLRSRVTRQKEKGKSPAHLKDKTQDLPGKRECVNGHQLMRGTFSGHSSCPLCGEPLLNSASLKEHPRTTLLSDGSSPAPSRNVGMTISQKGGLQPTPSPAGSGVRLGPIAGDMDEADSVFLKLKQTADDSLSLTSSNAESVFIEDPYIASLRCEIESDAHEFEAESWSLSVDLAYAKKQKKEVVKRQDVLYELMQTEAHHVRTLKIMLKVYSRALQEELQFSGQAVSRLFPCADDLLDMHSHFLARLKERRQEFLEEGSDRNYVIQKIGDVLVQQFSGETGERMKEKYAVFCSGHNDAVGQYKLLLQQSKKFQNLIKKIGNFSIVRRLGVQECILLVTQRITKYPVLVERIIQNTEAGTEDYKDLSQALSLIKDIISQVDAKVSEYEKDQRLKEIAAKTDQKSSGKLKNGLTFRKEDMLQQRQLHLEGALCWKSTSGRLKDVLAVLLTDVLLLLQEKDQKYVFASVDSKPPVISLQKLIVREVANEEKAMFLISASMQGPEMYEMYTSSKEDRNIWMAHIRRAVESCPDEEEDVFSEAEEKKIAEARTMKLQEFQERLSLKDQLIAQSLLEKQQIYLEMAQLSGLEESAQNRGLFRGGGDPSETLRGEQILRSAMSEIEGIQSLICQRHLGSTSSQVEEGSVSAGLPRRAETFGGYDSVGSPSKGGSFKRKVSNSDLRPQDWQGPASSPDSRPCDNSAPSGCCEESPQAVEMPSTESLPTVLELELVHRVQTLSQLLLSLQAVIAQQDSYVEMQRTAIQEREKQFRLQSTRGNLLLEQERQRNFEKQREERAGVEKLQSQLRQEQQRWERERARQQQELELAGARLQEREGEARQMRQRLDQERTELERQRQAYQHDLERLREAQRAVDRERERLELLRRFKKQNTVPGALPPEVLAEAQPASHPPSFNGDGLEGHSAPAKAPGTQGSAMLHGTGPDNVERPEVARWDSAPPESRPAKSDVPIQLLSATNQIQRQTAVQQQIPTKLAASTKGGKEKGSKSRGSQRWESSASFDLKQQLLLSKFIGKDESASRNRRSLSPVLPAAHGSAPASDPCFPAPSPAPAATPPEAFKFGGTSLPPVSPASSLPTTPLATTDEVSKEDVIFF</sequence>
<gene>
    <name type="primary">Arhgef18</name>
    <name type="synonym">Kiaa0521</name>
</gene>
<feature type="chain" id="PRO_0000341416" description="Rho guanine nucleotide exchange factor 18">
    <location>
        <begin position="1"/>
        <end position="1405"/>
    </location>
</feature>
<feature type="domain" description="DH" evidence="4">
    <location>
        <begin position="485"/>
        <end position="682"/>
    </location>
</feature>
<feature type="domain" description="PH" evidence="5">
    <location>
        <begin position="723"/>
        <end position="825"/>
    </location>
</feature>
<feature type="zinc finger region" description="C2H2-type; degenerate" evidence="3">
    <location>
        <begin position="347"/>
        <end position="372"/>
    </location>
</feature>
<feature type="region of interest" description="Disordered" evidence="6">
    <location>
        <begin position="1"/>
        <end position="47"/>
    </location>
</feature>
<feature type="region of interest" description="Disordered" evidence="6">
    <location>
        <begin position="92"/>
        <end position="115"/>
    </location>
</feature>
<feature type="region of interest" description="Disordered" evidence="6">
    <location>
        <begin position="289"/>
        <end position="330"/>
    </location>
</feature>
<feature type="region of interest" description="Disordered" evidence="6">
    <location>
        <begin position="936"/>
        <end position="1016"/>
    </location>
</feature>
<feature type="region of interest" description="Disordered" evidence="6">
    <location>
        <begin position="1198"/>
        <end position="1242"/>
    </location>
</feature>
<feature type="region of interest" description="Disordered" evidence="6">
    <location>
        <begin position="1274"/>
        <end position="1309"/>
    </location>
</feature>
<feature type="region of interest" description="Disordered" evidence="6">
    <location>
        <begin position="1328"/>
        <end position="1405"/>
    </location>
</feature>
<feature type="coiled-coil region" evidence="2">
    <location>
        <begin position="1084"/>
        <end position="1181"/>
    </location>
</feature>
<feature type="compositionally biased region" description="Basic and acidic residues" evidence="6">
    <location>
        <begin position="92"/>
        <end position="103"/>
    </location>
</feature>
<feature type="compositionally biased region" description="Basic and acidic residues" evidence="6">
    <location>
        <begin position="308"/>
        <end position="330"/>
    </location>
</feature>
<feature type="compositionally biased region" description="Pro residues" evidence="6">
    <location>
        <begin position="1355"/>
        <end position="1365"/>
    </location>
</feature>
<feature type="compositionally biased region" description="Low complexity" evidence="6">
    <location>
        <begin position="1375"/>
        <end position="1394"/>
    </location>
</feature>
<feature type="compositionally biased region" description="Basic and acidic residues" evidence="6">
    <location>
        <begin position="1396"/>
        <end position="1405"/>
    </location>
</feature>
<feature type="modified residue" description="Phosphothreonine" evidence="8">
    <location>
        <position position="952"/>
    </location>
</feature>
<feature type="modified residue" description="Phosphoserine" evidence="8">
    <location>
        <position position="961"/>
    </location>
</feature>
<feature type="modified residue" description="Phosphoserine" evidence="8">
    <location>
        <position position="1336"/>
    </location>
</feature>
<feature type="modified residue" description="Phosphoserine" evidence="8">
    <location>
        <position position="1338"/>
    </location>
</feature>
<feature type="splice variant" id="VSP_059878" description="In isoform 2, isoform 3 and isoform 4." evidence="7">
    <location>
        <begin position="1"/>
        <end position="384"/>
    </location>
</feature>
<feature type="splice variant" id="VSP_059879" description="In isoform 4." evidence="7">
    <original>IEGIQSLICQRHLGSTSSQVEEGSVSAGLPRRAETFGGYDSVGSPSKGGSFKRKVSNSDLRPQDWQGPASSPDSRPCDNSAPSGCCEESPQAVEMPSTESLPTVLELELVHRVQTLSQLLLSLQAVIAQQDSYVEMQRTAIQEREKQFRLQSTRGNLLLEQERQRNFEKQREERAGVEKLQSQLRQEQQRWERERARQQQELELAGARLQEREGEARQMRQRLDQERTELERQRQAYQHDLERLREAQRAVDRERERLELLRRFKKQNTVPGALPPEVLAEAQPASHPPSFNGDGLEGHSAPAKAPGTQGSAMLHGTGPDNVERPEVARWDSAPPESRPAKSDVPIQLLSATNQIQRQTAVQQQIPTKLAASTKGGKEKGSKSRGSQRWESSASFDLKQQLLLSKFIGKDESASRNRRSLSPVLPAAHGSAPASDPCFPAPSPAPAATPPEAFKFGGTSLPPVSPASSLPTTPLATTDEVSKEDVIFF</original>
    <variation>SKLASPLSYAMIFQGGLPGGPKPGSVLYCSPRTTVILLFFIIQGMESSMCNGSTAELYPNPLSTYSTNAPWVTLCSGVGGGGDKA</variation>
    <location>
        <begin position="918"/>
        <end position="1405"/>
    </location>
</feature>
<feature type="splice variant" id="VSP_059880" description="In isoform 3." evidence="7">
    <original>ASFDLKQQLLLSKFIGKDESASRNRRSLSPVLPAAHGSAPASDPCFPAPSPAPAATPPEAFKFGGTSLPPVSPASSLPTTPLATTDEVSKEDVIFF</original>
    <variation>GELHPTPTTQRSCTPLPVDLSQQHIWNADREADRQAPVCARRQRGSLFQLHFCCDKIP</variation>
    <location>
        <begin position="1310"/>
        <end position="1405"/>
    </location>
</feature>
<feature type="sequence conflict" description="In Ref. 3; AAH60639." ref="3">
    <original>Q</original>
    <variation>H</variation>
    <location>
        <position position="217"/>
    </location>
</feature>
<feature type="sequence conflict" description="In Ref. 1; BAC30940." ref="1">
    <original>N</original>
    <variation>S</variation>
    <location>
        <position position="437"/>
    </location>
</feature>
<feature type="sequence conflict" description="In Ref. 3; AAH34512." ref="3">
    <original>S</original>
    <variation>P</variation>
    <location>
        <position position="1351"/>
    </location>
</feature>
<feature type="helix" evidence="9">
    <location>
        <begin position="688"/>
        <end position="698"/>
    </location>
</feature>
<feature type="strand" evidence="9">
    <location>
        <begin position="704"/>
        <end position="706"/>
    </location>
</feature>
<feature type="strand" evidence="9">
    <location>
        <begin position="712"/>
        <end position="714"/>
    </location>
</feature>
<feature type="helix" evidence="9">
    <location>
        <begin position="715"/>
        <end position="718"/>
    </location>
</feature>
<feature type="strand" evidence="9">
    <location>
        <begin position="724"/>
        <end position="733"/>
    </location>
</feature>
<feature type="strand" evidence="9">
    <location>
        <begin position="739"/>
        <end position="757"/>
    </location>
</feature>
<feature type="strand" evidence="9">
    <location>
        <begin position="760"/>
        <end position="763"/>
    </location>
</feature>
<feature type="strand" evidence="9">
    <location>
        <begin position="771"/>
        <end position="774"/>
    </location>
</feature>
<feature type="strand" evidence="9">
    <location>
        <begin position="779"/>
        <end position="783"/>
    </location>
</feature>
<feature type="strand" evidence="9">
    <location>
        <begin position="786"/>
        <end position="794"/>
    </location>
</feature>
<feature type="strand" evidence="9">
    <location>
        <begin position="801"/>
        <end position="806"/>
    </location>
</feature>
<feature type="helix" evidence="9">
    <location>
        <begin position="810"/>
        <end position="825"/>
    </location>
</feature>
<comment type="function">
    <text evidence="1">Acts as a guanine nucleotide exchange factor (GEF) for RhoA GTPases. May play a role in actin cytoskeleton reorganization in different tissues since its activation induces formation of actin stress fibers. Also acts as a GEF for RAC1, inducing production of reactive oxygen species (ROS). Does not act as a GEF for CDC42. The G protein beta-gamma (Gbetagamma) subunits of heterotrimeric G proteins act as activators, explaining the integrated effects of LPA and other G-protein coupled receptor agonists on actin stress fiber formation, cell shape change and ROS production. Required for EPB41L4B-mediated regulation of the circumferential actomyosin belt in epithelial cells.</text>
</comment>
<comment type="subunit">
    <text evidence="1">Interacts with SEPT9; interaction may inhibit GEF activity. Interacts with Gbetagamma subunits GNB1 and GNG2 (By similarity). Interacts with EPB41L4B. Interacts with PATJ (via C-terminus).</text>
</comment>
<comment type="subcellular location">
    <subcellularLocation>
        <location evidence="1">Cytoplasm</location>
    </subcellularLocation>
    <subcellularLocation>
        <location evidence="1">Cytoplasm</location>
        <location evidence="1">Cytoskeleton</location>
    </subcellularLocation>
    <subcellularLocation>
        <location evidence="1">Cell membrane</location>
    </subcellularLocation>
    <subcellularLocation>
        <location evidence="1">Apical cell membrane</location>
    </subcellularLocation>
    <text evidence="1">In unactivated eosinophils, distributed around the cell periphery in the perimembranous region (By similarity). In activated eosinophils, relocates to the tip of the nucleopod, a membrane structure formed during activation when the nucleus moves to one end of the cell, and is also concentrated in membrane protrusions at the opposite end of the cell (By similarity). Localizes to the apical cell membrane in epithelial cells (By similarity).</text>
</comment>
<comment type="alternative products">
    <event type="alternative splicing"/>
    <isoform>
        <id>Q6P9R4-4</id>
        <name>1</name>
        <sequence type="displayed"/>
    </isoform>
    <isoform>
        <id>Q6P9R4-1</id>
        <name>2</name>
        <sequence type="described" ref="VSP_059878"/>
    </isoform>
    <isoform>
        <id>Q6P9R4-2</id>
        <name>3</name>
        <sequence type="described" ref="VSP_059878 VSP_059880"/>
    </isoform>
    <isoform>
        <id>Q6P9R4-3</id>
        <name>4</name>
        <sequence type="described" ref="VSP_059878 VSP_059879"/>
    </isoform>
</comment>
<protein>
    <recommendedName>
        <fullName>Rho guanine nucleotide exchange factor 18</fullName>
    </recommendedName>
</protein>
<accession>Q6P9R4</accession>
<accession>E9QK59</accession>
<accession>Q6A055</accession>
<accession>Q8BYA4</accession>
<accession>Q8K227</accession>
<evidence type="ECO:0000250" key="1">
    <source>
        <dbReference type="UniProtKB" id="Q6ZSZ5"/>
    </source>
</evidence>
<evidence type="ECO:0000255" key="2"/>
<evidence type="ECO:0000255" key="3">
    <source>
        <dbReference type="PROSITE-ProRule" id="PRU00042"/>
    </source>
</evidence>
<evidence type="ECO:0000255" key="4">
    <source>
        <dbReference type="PROSITE-ProRule" id="PRU00062"/>
    </source>
</evidence>
<evidence type="ECO:0000255" key="5">
    <source>
        <dbReference type="PROSITE-ProRule" id="PRU00145"/>
    </source>
</evidence>
<evidence type="ECO:0000256" key="6">
    <source>
        <dbReference type="SAM" id="MobiDB-lite"/>
    </source>
</evidence>
<evidence type="ECO:0000305" key="7"/>
<evidence type="ECO:0007744" key="8">
    <source>
    </source>
</evidence>
<evidence type="ECO:0007829" key="9">
    <source>
        <dbReference type="PDB" id="6BCB"/>
    </source>
</evidence>
<proteinExistence type="evidence at protein level"/>